<evidence type="ECO:0000255" key="1">
    <source>
        <dbReference type="HAMAP-Rule" id="MF_00480"/>
    </source>
</evidence>
<evidence type="ECO:0000305" key="2"/>
<gene>
    <name evidence="1" type="primary">rpsG</name>
    <name type="ordered locus">Atu1950</name>
    <name type="ORF">AGR_C_3559</name>
</gene>
<accession>Q8UE14</accession>
<dbReference type="EMBL" id="AE007869">
    <property type="protein sequence ID" value="AAK87711.1"/>
    <property type="molecule type" value="Genomic_DNA"/>
</dbReference>
<dbReference type="PIR" id="AD2816">
    <property type="entry name" value="AD2816"/>
</dbReference>
<dbReference type="PIR" id="F97594">
    <property type="entry name" value="F97594"/>
</dbReference>
<dbReference type="RefSeq" id="NP_354926.1">
    <property type="nucleotide sequence ID" value="NC_003062.2"/>
</dbReference>
<dbReference type="RefSeq" id="WP_003507761.1">
    <property type="nucleotide sequence ID" value="NC_003062.2"/>
</dbReference>
<dbReference type="SMR" id="Q8UE14"/>
<dbReference type="STRING" id="176299.Atu1950"/>
<dbReference type="EnsemblBacteria" id="AAK87711">
    <property type="protein sequence ID" value="AAK87711"/>
    <property type="gene ID" value="Atu1950"/>
</dbReference>
<dbReference type="GeneID" id="97364697"/>
<dbReference type="KEGG" id="atu:Atu1950"/>
<dbReference type="PATRIC" id="fig|176299.10.peg.1962"/>
<dbReference type="eggNOG" id="COG0049">
    <property type="taxonomic scope" value="Bacteria"/>
</dbReference>
<dbReference type="HOGENOM" id="CLU_072226_1_1_5"/>
<dbReference type="OrthoDB" id="9807653at2"/>
<dbReference type="PhylomeDB" id="Q8UE14"/>
<dbReference type="BioCyc" id="AGRO:ATU1950-MONOMER"/>
<dbReference type="Proteomes" id="UP000000813">
    <property type="component" value="Chromosome circular"/>
</dbReference>
<dbReference type="GO" id="GO:0015935">
    <property type="term" value="C:small ribosomal subunit"/>
    <property type="evidence" value="ECO:0007669"/>
    <property type="project" value="InterPro"/>
</dbReference>
<dbReference type="GO" id="GO:0019843">
    <property type="term" value="F:rRNA binding"/>
    <property type="evidence" value="ECO:0007669"/>
    <property type="project" value="UniProtKB-UniRule"/>
</dbReference>
<dbReference type="GO" id="GO:0003735">
    <property type="term" value="F:structural constituent of ribosome"/>
    <property type="evidence" value="ECO:0007669"/>
    <property type="project" value="InterPro"/>
</dbReference>
<dbReference type="GO" id="GO:0000049">
    <property type="term" value="F:tRNA binding"/>
    <property type="evidence" value="ECO:0007669"/>
    <property type="project" value="UniProtKB-UniRule"/>
</dbReference>
<dbReference type="GO" id="GO:0006412">
    <property type="term" value="P:translation"/>
    <property type="evidence" value="ECO:0007669"/>
    <property type="project" value="UniProtKB-UniRule"/>
</dbReference>
<dbReference type="CDD" id="cd14869">
    <property type="entry name" value="uS7_Bacteria"/>
    <property type="match status" value="1"/>
</dbReference>
<dbReference type="FunFam" id="1.10.455.10:FF:000001">
    <property type="entry name" value="30S ribosomal protein S7"/>
    <property type="match status" value="1"/>
</dbReference>
<dbReference type="Gene3D" id="1.10.455.10">
    <property type="entry name" value="Ribosomal protein S7 domain"/>
    <property type="match status" value="1"/>
</dbReference>
<dbReference type="HAMAP" id="MF_00480_B">
    <property type="entry name" value="Ribosomal_uS7_B"/>
    <property type="match status" value="1"/>
</dbReference>
<dbReference type="InterPro" id="IPR000235">
    <property type="entry name" value="Ribosomal_uS7"/>
</dbReference>
<dbReference type="InterPro" id="IPR005717">
    <property type="entry name" value="Ribosomal_uS7_bac/org-type"/>
</dbReference>
<dbReference type="InterPro" id="IPR020606">
    <property type="entry name" value="Ribosomal_uS7_CS"/>
</dbReference>
<dbReference type="InterPro" id="IPR023798">
    <property type="entry name" value="Ribosomal_uS7_dom"/>
</dbReference>
<dbReference type="InterPro" id="IPR036823">
    <property type="entry name" value="Ribosomal_uS7_dom_sf"/>
</dbReference>
<dbReference type="NCBIfam" id="TIGR01029">
    <property type="entry name" value="rpsG_bact"/>
    <property type="match status" value="1"/>
</dbReference>
<dbReference type="PANTHER" id="PTHR11205">
    <property type="entry name" value="RIBOSOMAL PROTEIN S7"/>
    <property type="match status" value="1"/>
</dbReference>
<dbReference type="Pfam" id="PF00177">
    <property type="entry name" value="Ribosomal_S7"/>
    <property type="match status" value="1"/>
</dbReference>
<dbReference type="PIRSF" id="PIRSF002122">
    <property type="entry name" value="RPS7p_RPS7a_RPS5e_RPS7o"/>
    <property type="match status" value="1"/>
</dbReference>
<dbReference type="SUPFAM" id="SSF47973">
    <property type="entry name" value="Ribosomal protein S7"/>
    <property type="match status" value="1"/>
</dbReference>
<dbReference type="PROSITE" id="PS00052">
    <property type="entry name" value="RIBOSOMAL_S7"/>
    <property type="match status" value="1"/>
</dbReference>
<organism>
    <name type="scientific">Agrobacterium fabrum (strain C58 / ATCC 33970)</name>
    <name type="common">Agrobacterium tumefaciens (strain C58)</name>
    <dbReference type="NCBI Taxonomy" id="176299"/>
    <lineage>
        <taxon>Bacteria</taxon>
        <taxon>Pseudomonadati</taxon>
        <taxon>Pseudomonadota</taxon>
        <taxon>Alphaproteobacteria</taxon>
        <taxon>Hyphomicrobiales</taxon>
        <taxon>Rhizobiaceae</taxon>
        <taxon>Rhizobium/Agrobacterium group</taxon>
        <taxon>Agrobacterium</taxon>
        <taxon>Agrobacterium tumefaciens complex</taxon>
    </lineage>
</organism>
<reference key="1">
    <citation type="journal article" date="2001" name="Science">
        <title>The genome of the natural genetic engineer Agrobacterium tumefaciens C58.</title>
        <authorList>
            <person name="Wood D.W."/>
            <person name="Setubal J.C."/>
            <person name="Kaul R."/>
            <person name="Monks D.E."/>
            <person name="Kitajima J.P."/>
            <person name="Okura V.K."/>
            <person name="Zhou Y."/>
            <person name="Chen L."/>
            <person name="Wood G.E."/>
            <person name="Almeida N.F. Jr."/>
            <person name="Woo L."/>
            <person name="Chen Y."/>
            <person name="Paulsen I.T."/>
            <person name="Eisen J.A."/>
            <person name="Karp P.D."/>
            <person name="Bovee D. Sr."/>
            <person name="Chapman P."/>
            <person name="Clendenning J."/>
            <person name="Deatherage G."/>
            <person name="Gillet W."/>
            <person name="Grant C."/>
            <person name="Kutyavin T."/>
            <person name="Levy R."/>
            <person name="Li M.-J."/>
            <person name="McClelland E."/>
            <person name="Palmieri A."/>
            <person name="Raymond C."/>
            <person name="Rouse G."/>
            <person name="Saenphimmachak C."/>
            <person name="Wu Z."/>
            <person name="Romero P."/>
            <person name="Gordon D."/>
            <person name="Zhang S."/>
            <person name="Yoo H."/>
            <person name="Tao Y."/>
            <person name="Biddle P."/>
            <person name="Jung M."/>
            <person name="Krespan W."/>
            <person name="Perry M."/>
            <person name="Gordon-Kamm B."/>
            <person name="Liao L."/>
            <person name="Kim S."/>
            <person name="Hendrick C."/>
            <person name="Zhao Z.-Y."/>
            <person name="Dolan M."/>
            <person name="Chumley F."/>
            <person name="Tingey S.V."/>
            <person name="Tomb J.-F."/>
            <person name="Gordon M.P."/>
            <person name="Olson M.V."/>
            <person name="Nester E.W."/>
        </authorList>
    </citation>
    <scope>NUCLEOTIDE SEQUENCE [LARGE SCALE GENOMIC DNA]</scope>
    <source>
        <strain>C58 / ATCC 33970</strain>
    </source>
</reference>
<reference key="2">
    <citation type="journal article" date="2001" name="Science">
        <title>Genome sequence of the plant pathogen and biotechnology agent Agrobacterium tumefaciens C58.</title>
        <authorList>
            <person name="Goodner B."/>
            <person name="Hinkle G."/>
            <person name="Gattung S."/>
            <person name="Miller N."/>
            <person name="Blanchard M."/>
            <person name="Qurollo B."/>
            <person name="Goldman B.S."/>
            <person name="Cao Y."/>
            <person name="Askenazi M."/>
            <person name="Halling C."/>
            <person name="Mullin L."/>
            <person name="Houmiel K."/>
            <person name="Gordon J."/>
            <person name="Vaudin M."/>
            <person name="Iartchouk O."/>
            <person name="Epp A."/>
            <person name="Liu F."/>
            <person name="Wollam C."/>
            <person name="Allinger M."/>
            <person name="Doughty D."/>
            <person name="Scott C."/>
            <person name="Lappas C."/>
            <person name="Markelz B."/>
            <person name="Flanagan C."/>
            <person name="Crowell C."/>
            <person name="Gurson J."/>
            <person name="Lomo C."/>
            <person name="Sear C."/>
            <person name="Strub G."/>
            <person name="Cielo C."/>
            <person name="Slater S."/>
        </authorList>
    </citation>
    <scope>NUCLEOTIDE SEQUENCE [LARGE SCALE GENOMIC DNA]</scope>
    <source>
        <strain>C58 / ATCC 33970</strain>
    </source>
</reference>
<sequence length="156" mass="17653">MSRRHSAEKREINPDPKFGDLVVTKFMNAIMLHGKKSVAESIVYGAFDVVQGKTKQEPLGVFHSALDNVAPHVEVRSRRVGGATYQVPVDVRPERRQALAIRWLITAARKRNETTMVDRLSGELMDAANNRGSAVKKREDTHKMADANRAFSHYRW</sequence>
<feature type="chain" id="PRO_0000124204" description="Small ribosomal subunit protein uS7">
    <location>
        <begin position="1"/>
        <end position="156"/>
    </location>
</feature>
<comment type="function">
    <text evidence="1">One of the primary rRNA binding proteins, it binds directly to 16S rRNA where it nucleates assembly of the head domain of the 30S subunit. Is located at the subunit interface close to the decoding center, probably blocks exit of the E-site tRNA.</text>
</comment>
<comment type="subunit">
    <text evidence="1">Part of the 30S ribosomal subunit. Contacts proteins S9 and S11.</text>
</comment>
<comment type="similarity">
    <text evidence="1">Belongs to the universal ribosomal protein uS7 family.</text>
</comment>
<protein>
    <recommendedName>
        <fullName evidence="1">Small ribosomal subunit protein uS7</fullName>
    </recommendedName>
    <alternativeName>
        <fullName evidence="2">30S ribosomal protein S7</fullName>
    </alternativeName>
</protein>
<keyword id="KW-1185">Reference proteome</keyword>
<keyword id="KW-0687">Ribonucleoprotein</keyword>
<keyword id="KW-0689">Ribosomal protein</keyword>
<keyword id="KW-0694">RNA-binding</keyword>
<keyword id="KW-0699">rRNA-binding</keyword>
<keyword id="KW-0820">tRNA-binding</keyword>
<name>RS7_AGRFC</name>
<proteinExistence type="inferred from homology"/>